<accession>Q58DM3</accession>
<dbReference type="EMBL" id="BT021574">
    <property type="protein sequence ID" value="AAX46421.1"/>
    <property type="molecule type" value="mRNA"/>
</dbReference>
<dbReference type="EMBL" id="BC113322">
    <property type="protein sequence ID" value="AAI13323.1"/>
    <property type="molecule type" value="mRNA"/>
</dbReference>
<dbReference type="RefSeq" id="NP_001029404.1">
    <property type="nucleotide sequence ID" value="NM_001034232.2"/>
</dbReference>
<dbReference type="SMR" id="Q58DM3"/>
<dbReference type="FunCoup" id="Q58DM3">
    <property type="interactions" value="486"/>
</dbReference>
<dbReference type="STRING" id="9913.ENSBTAP00000008479"/>
<dbReference type="GlyCosmos" id="Q58DM3">
    <property type="glycosylation" value="2 sites, No reported glycans"/>
</dbReference>
<dbReference type="GlyGen" id="Q58DM3">
    <property type="glycosylation" value="2 sites"/>
</dbReference>
<dbReference type="PaxDb" id="9913-ENSBTAP00000008479"/>
<dbReference type="Ensembl" id="ENSBTAT00000008479.5">
    <property type="protein sequence ID" value="ENSBTAP00000008479.3"/>
    <property type="gene ID" value="ENSBTAG00000006466.5"/>
</dbReference>
<dbReference type="GeneID" id="505040"/>
<dbReference type="KEGG" id="bta:505040"/>
<dbReference type="CTD" id="963"/>
<dbReference type="VEuPathDB" id="HostDB:ENSBTAG00000006466"/>
<dbReference type="VGNC" id="VGNC:27039">
    <property type="gene designation" value="CD53"/>
</dbReference>
<dbReference type="eggNOG" id="KOG3882">
    <property type="taxonomic scope" value="Eukaryota"/>
</dbReference>
<dbReference type="GeneTree" id="ENSGT00940000159669"/>
<dbReference type="HOGENOM" id="CLU_055524_4_3_1"/>
<dbReference type="InParanoid" id="Q58DM3"/>
<dbReference type="OMA" id="IQSFLHC"/>
<dbReference type="OrthoDB" id="432835at2759"/>
<dbReference type="TreeFam" id="TF352892"/>
<dbReference type="Reactome" id="R-BTA-6798695">
    <property type="pathway name" value="Neutrophil degranulation"/>
</dbReference>
<dbReference type="Proteomes" id="UP000009136">
    <property type="component" value="Chromosome 3"/>
</dbReference>
<dbReference type="Bgee" id="ENSBTAG00000006466">
    <property type="expression patterns" value="Expressed in monocyte and 104 other cell types or tissues"/>
</dbReference>
<dbReference type="GO" id="GO:0005911">
    <property type="term" value="C:cell-cell junction"/>
    <property type="evidence" value="ECO:0000250"/>
    <property type="project" value="UniProtKB"/>
</dbReference>
<dbReference type="GO" id="GO:0001772">
    <property type="term" value="C:immunological synapse"/>
    <property type="evidence" value="ECO:0007669"/>
    <property type="project" value="Ensembl"/>
</dbReference>
<dbReference type="GO" id="GO:0005886">
    <property type="term" value="C:plasma membrane"/>
    <property type="evidence" value="ECO:0000250"/>
    <property type="project" value="UniProtKB"/>
</dbReference>
<dbReference type="GO" id="GO:0045202">
    <property type="term" value="C:synapse"/>
    <property type="evidence" value="ECO:0007669"/>
    <property type="project" value="UniProtKB-SubCell"/>
</dbReference>
<dbReference type="GO" id="GO:0042802">
    <property type="term" value="F:identical protein binding"/>
    <property type="evidence" value="ECO:0007669"/>
    <property type="project" value="Ensembl"/>
</dbReference>
<dbReference type="GO" id="GO:0043495">
    <property type="term" value="F:protein-membrane adaptor activity"/>
    <property type="evidence" value="ECO:0007669"/>
    <property type="project" value="Ensembl"/>
</dbReference>
<dbReference type="GO" id="GO:1901741">
    <property type="term" value="P:positive regulation of myoblast fusion"/>
    <property type="evidence" value="ECO:0000250"/>
    <property type="project" value="UniProtKB"/>
</dbReference>
<dbReference type="GO" id="GO:0043113">
    <property type="term" value="P:receptor clustering"/>
    <property type="evidence" value="ECO:0007669"/>
    <property type="project" value="Ensembl"/>
</dbReference>
<dbReference type="FunFam" id="1.10.1450.10:FF:000024">
    <property type="entry name" value="Tetraspanin"/>
    <property type="match status" value="1"/>
</dbReference>
<dbReference type="Gene3D" id="1.10.1450.10">
    <property type="entry name" value="Tetraspanin"/>
    <property type="match status" value="1"/>
</dbReference>
<dbReference type="InterPro" id="IPR018499">
    <property type="entry name" value="Tetraspanin/Peripherin"/>
</dbReference>
<dbReference type="InterPro" id="IPR000301">
    <property type="entry name" value="Tetraspanin_animals"/>
</dbReference>
<dbReference type="InterPro" id="IPR018503">
    <property type="entry name" value="Tetraspanin_CS"/>
</dbReference>
<dbReference type="InterPro" id="IPR008952">
    <property type="entry name" value="Tetraspanin_EC2_sf"/>
</dbReference>
<dbReference type="PANTHER" id="PTHR19282:SF39">
    <property type="entry name" value="LEUKOCYTE SURFACE ANTIGEN CD53"/>
    <property type="match status" value="1"/>
</dbReference>
<dbReference type="PANTHER" id="PTHR19282">
    <property type="entry name" value="TETRASPANIN"/>
    <property type="match status" value="1"/>
</dbReference>
<dbReference type="Pfam" id="PF00335">
    <property type="entry name" value="Tetraspanin"/>
    <property type="match status" value="1"/>
</dbReference>
<dbReference type="PIRSF" id="PIRSF002419">
    <property type="entry name" value="Tetraspanin"/>
    <property type="match status" value="1"/>
</dbReference>
<dbReference type="PRINTS" id="PR00259">
    <property type="entry name" value="TMFOUR"/>
</dbReference>
<dbReference type="SUPFAM" id="SSF48652">
    <property type="entry name" value="Tetraspanin"/>
    <property type="match status" value="1"/>
</dbReference>
<dbReference type="PROSITE" id="PS00421">
    <property type="entry name" value="TM4_1"/>
    <property type="match status" value="1"/>
</dbReference>
<comment type="function">
    <text evidence="1 2">Structural component of specialized membrane microdomains known as tetraspanin-enriched microdomains (TERMs), which act as platforms for receptor clustering and signaling. Participates thereby in diverse biological functions such as cell signal transduction, adhesion, migration and protein trafficking. Plays a role in the activation of monocytes and B-cells (By similarity). Acts as an essential regulator of B-cell development by promoting interleukin-7 receptor/IL7R signaling (By similarity). Also promotes, in B-cells, the BCR signaling by recruiting PKC to the plasma membrane in order to phosphorylate its substrates (By similarity). Plays an essential role in B- and T-cells homing to lymph nodes by stabilizing L-selectin/SELL cell surface expression (By similarity). Also mediates metabolic and inflammatory functions in hepatocytes and adipose tissue by promoting TNF-alpha and LPS signaling independent of the immune compartment (By similarity).</text>
</comment>
<comment type="subunit">
    <text evidence="1 2">Interacts with SCIMP. Interacts with CD45/PTPRC (By similarity). Interacts with IL7R (By similarity). Interacts with RBL2 and PPP2CA (By similarity).</text>
</comment>
<comment type="subcellular location">
    <subcellularLocation>
        <location evidence="1">Cell membrane</location>
    </subcellularLocation>
    <subcellularLocation>
        <location evidence="2">Cell junction</location>
    </subcellularLocation>
    <subcellularLocation>
        <location evidence="1">Membrane</location>
        <topology evidence="1">Multi-pass membrane protein</topology>
    </subcellularLocation>
    <subcellularLocation>
        <location evidence="1">Synapse</location>
    </subcellularLocation>
    <text evidence="2">Concentrates in localized microdomains along the plasma membrane at the contact sites between cells of fused myotubes.</text>
</comment>
<comment type="similarity">
    <text evidence="4">Belongs to the tetraspanin (TM4SF) family.</text>
</comment>
<feature type="chain" id="PRO_0000237572" description="Leukocyte surface antigen CD53">
    <location>
        <begin position="1"/>
        <end position="219"/>
    </location>
</feature>
<feature type="topological domain" description="Cytoplasmic" evidence="3">
    <location>
        <begin position="1"/>
        <end position="11"/>
    </location>
</feature>
<feature type="transmembrane region" description="Helical" evidence="3">
    <location>
        <begin position="12"/>
        <end position="32"/>
    </location>
</feature>
<feature type="topological domain" description="Extracellular" evidence="3">
    <location>
        <begin position="33"/>
        <end position="54"/>
    </location>
</feature>
<feature type="transmembrane region" description="Helical" evidence="3">
    <location>
        <begin position="55"/>
        <end position="69"/>
    </location>
</feature>
<feature type="topological domain" description="Cytoplasmic" evidence="3">
    <location>
        <begin position="70"/>
        <end position="80"/>
    </location>
</feature>
<feature type="transmembrane region" description="Helical" evidence="3">
    <location>
        <begin position="81"/>
        <end position="106"/>
    </location>
</feature>
<feature type="topological domain" description="Extracellular" evidence="3">
    <location>
        <begin position="107"/>
        <end position="181"/>
    </location>
</feature>
<feature type="transmembrane region" description="Helical" evidence="3">
    <location>
        <begin position="182"/>
        <end position="206"/>
    </location>
</feature>
<feature type="topological domain" description="Cytoplasmic" evidence="3">
    <location>
        <begin position="207"/>
        <end position="219"/>
    </location>
</feature>
<feature type="glycosylation site" description="N-linked (GlcNAc...) asparagine" evidence="3">
    <location>
        <position position="129"/>
    </location>
</feature>
<feature type="glycosylation site" description="N-linked (GlcNAc...) asparagine" evidence="3">
    <location>
        <position position="148"/>
    </location>
</feature>
<evidence type="ECO:0000250" key="1">
    <source>
        <dbReference type="UniProtKB" id="P19397"/>
    </source>
</evidence>
<evidence type="ECO:0000250" key="2">
    <source>
        <dbReference type="UniProtKB" id="Q61451"/>
    </source>
</evidence>
<evidence type="ECO:0000255" key="3"/>
<evidence type="ECO:0000305" key="4"/>
<reference key="1">
    <citation type="journal article" date="2005" name="BMC Genomics">
        <title>Characterization of 954 bovine full-CDS cDNA sequences.</title>
        <authorList>
            <person name="Harhay G.P."/>
            <person name="Sonstegard T.S."/>
            <person name="Keele J.W."/>
            <person name="Heaton M.P."/>
            <person name="Clawson M.L."/>
            <person name="Snelling W.M."/>
            <person name="Wiedmann R.T."/>
            <person name="Van Tassell C.P."/>
            <person name="Smith T.P.L."/>
        </authorList>
    </citation>
    <scope>NUCLEOTIDE SEQUENCE [LARGE SCALE MRNA]</scope>
</reference>
<reference key="2">
    <citation type="submission" date="2006-02" db="EMBL/GenBank/DDBJ databases">
        <authorList>
            <consortium name="NIH - Mammalian Gene Collection (MGC) project"/>
        </authorList>
    </citation>
    <scope>NUCLEOTIDE SEQUENCE [LARGE SCALE MRNA]</scope>
    <source>
        <strain>Hereford</strain>
        <tissue>Uterus</tissue>
    </source>
</reference>
<gene>
    <name type="primary">CD53</name>
</gene>
<keyword id="KW-0965">Cell junction</keyword>
<keyword id="KW-1003">Cell membrane</keyword>
<keyword id="KW-0325">Glycoprotein</keyword>
<keyword id="KW-0472">Membrane</keyword>
<keyword id="KW-1185">Reference proteome</keyword>
<keyword id="KW-0770">Synapse</keyword>
<keyword id="KW-0812">Transmembrane</keyword>
<keyword id="KW-1133">Transmembrane helix</keyword>
<organism>
    <name type="scientific">Bos taurus</name>
    <name type="common">Bovine</name>
    <dbReference type="NCBI Taxonomy" id="9913"/>
    <lineage>
        <taxon>Eukaryota</taxon>
        <taxon>Metazoa</taxon>
        <taxon>Chordata</taxon>
        <taxon>Craniata</taxon>
        <taxon>Vertebrata</taxon>
        <taxon>Euteleostomi</taxon>
        <taxon>Mammalia</taxon>
        <taxon>Eutheria</taxon>
        <taxon>Laurasiatheria</taxon>
        <taxon>Artiodactyla</taxon>
        <taxon>Ruminantia</taxon>
        <taxon>Pecora</taxon>
        <taxon>Bovidae</taxon>
        <taxon>Bovinae</taxon>
        <taxon>Bos</taxon>
    </lineage>
</organism>
<sequence>MGMSSLKLLKFVLFFFNLIFWFCGCCILGLGIYLLIHSKFGVLFHNLPSLTLGNVLVIVGSVIMVVAFLGCMGSIKENKCLLMSFFVLLLIILLAEVTLAILLFVYEQKLKEYVAEGLTESIQRYNSDNSTKAAWDSIQSFLQCCGVNGTSDWTSGPPASCPKGSAVKGCYIQAKQWFHSNFLYIGITTICVCVIQVLGMSFALTLNCQIDKTSQVLGL</sequence>
<name>CD53_BOVIN</name>
<protein>
    <recommendedName>
        <fullName>Leukocyte surface antigen CD53</fullName>
    </recommendedName>
    <alternativeName>
        <fullName>Cell surface glycoprotein CD53</fullName>
    </alternativeName>
    <cdAntigenName>CD53</cdAntigenName>
</protein>
<proteinExistence type="evidence at transcript level"/>